<feature type="chain" id="PRO_1000086014" description="Small ribosomal subunit protein uS5">
    <location>
        <begin position="1"/>
        <end position="166"/>
    </location>
</feature>
<feature type="domain" description="S5 DRBM" evidence="1">
    <location>
        <begin position="11"/>
        <end position="74"/>
    </location>
</feature>
<sequence length="166" mass="17500">MSNIEKQVGELQEKLIAVNRVSKTVKGGRIMSFTALTVVGDGNGRVGFGYGKAREVPAAIQKAMEKARRNMINVALNEGTLQHPVKGVHTGSRVFMQPASEGTGIIAGGAMRAVLEVAGVRNVLSKAYGSTNPINVVRATIDALANMKSPEMVAAKRGKTVDEILG</sequence>
<protein>
    <recommendedName>
        <fullName evidence="1">Small ribosomal subunit protein uS5</fullName>
    </recommendedName>
    <alternativeName>
        <fullName evidence="2">30S ribosomal protein S5</fullName>
    </alternativeName>
</protein>
<accession>A5UDT0</accession>
<reference key="1">
    <citation type="journal article" date="2007" name="Genome Biol.">
        <title>Characterization and modeling of the Haemophilus influenzae core and supragenomes based on the complete genomic sequences of Rd and 12 clinical nontypeable strains.</title>
        <authorList>
            <person name="Hogg J.S."/>
            <person name="Hu F.Z."/>
            <person name="Janto B."/>
            <person name="Boissy R."/>
            <person name="Hayes J."/>
            <person name="Keefe R."/>
            <person name="Post J.C."/>
            <person name="Ehrlich G.D."/>
        </authorList>
    </citation>
    <scope>NUCLEOTIDE SEQUENCE [LARGE SCALE GENOMIC DNA]</scope>
    <source>
        <strain>PittEE</strain>
    </source>
</reference>
<organism>
    <name type="scientific">Haemophilus influenzae (strain PittEE)</name>
    <dbReference type="NCBI Taxonomy" id="374930"/>
    <lineage>
        <taxon>Bacteria</taxon>
        <taxon>Pseudomonadati</taxon>
        <taxon>Pseudomonadota</taxon>
        <taxon>Gammaproteobacteria</taxon>
        <taxon>Pasteurellales</taxon>
        <taxon>Pasteurellaceae</taxon>
        <taxon>Haemophilus</taxon>
    </lineage>
</organism>
<keyword id="KW-0687">Ribonucleoprotein</keyword>
<keyword id="KW-0689">Ribosomal protein</keyword>
<keyword id="KW-0694">RNA-binding</keyword>
<keyword id="KW-0699">rRNA-binding</keyword>
<evidence type="ECO:0000255" key="1">
    <source>
        <dbReference type="HAMAP-Rule" id="MF_01307"/>
    </source>
</evidence>
<evidence type="ECO:0000305" key="2"/>
<name>RS5_HAEIE</name>
<comment type="function">
    <text evidence="1">With S4 and S12 plays an important role in translational accuracy.</text>
</comment>
<comment type="function">
    <text evidence="1">Located at the back of the 30S subunit body where it stabilizes the conformation of the head with respect to the body.</text>
</comment>
<comment type="subunit">
    <text evidence="1">Part of the 30S ribosomal subunit. Contacts proteins S4 and S8.</text>
</comment>
<comment type="domain">
    <text>The N-terminal domain interacts with the head of the 30S subunit; the C-terminal domain interacts with the body and contacts protein S4. The interaction surface between S4 and S5 is involved in control of translational fidelity.</text>
</comment>
<comment type="similarity">
    <text evidence="1">Belongs to the universal ribosomal protein uS5 family.</text>
</comment>
<proteinExistence type="inferred from homology"/>
<dbReference type="EMBL" id="CP000671">
    <property type="protein sequence ID" value="ABQ98931.1"/>
    <property type="molecule type" value="Genomic_DNA"/>
</dbReference>
<dbReference type="SMR" id="A5UDT0"/>
<dbReference type="KEGG" id="hip:CGSHiEE_08090"/>
<dbReference type="HOGENOM" id="CLU_065898_2_2_6"/>
<dbReference type="GO" id="GO:0015935">
    <property type="term" value="C:small ribosomal subunit"/>
    <property type="evidence" value="ECO:0007669"/>
    <property type="project" value="InterPro"/>
</dbReference>
<dbReference type="GO" id="GO:0019843">
    <property type="term" value="F:rRNA binding"/>
    <property type="evidence" value="ECO:0007669"/>
    <property type="project" value="UniProtKB-UniRule"/>
</dbReference>
<dbReference type="GO" id="GO:0003735">
    <property type="term" value="F:structural constituent of ribosome"/>
    <property type="evidence" value="ECO:0007669"/>
    <property type="project" value="InterPro"/>
</dbReference>
<dbReference type="GO" id="GO:0006412">
    <property type="term" value="P:translation"/>
    <property type="evidence" value="ECO:0007669"/>
    <property type="project" value="UniProtKB-UniRule"/>
</dbReference>
<dbReference type="FunFam" id="3.30.160.20:FF:000001">
    <property type="entry name" value="30S ribosomal protein S5"/>
    <property type="match status" value="1"/>
</dbReference>
<dbReference type="FunFam" id="3.30.230.10:FF:000002">
    <property type="entry name" value="30S ribosomal protein S5"/>
    <property type="match status" value="1"/>
</dbReference>
<dbReference type="Gene3D" id="3.30.160.20">
    <property type="match status" value="1"/>
</dbReference>
<dbReference type="Gene3D" id="3.30.230.10">
    <property type="match status" value="1"/>
</dbReference>
<dbReference type="HAMAP" id="MF_01307_B">
    <property type="entry name" value="Ribosomal_uS5_B"/>
    <property type="match status" value="1"/>
</dbReference>
<dbReference type="InterPro" id="IPR020568">
    <property type="entry name" value="Ribosomal_Su5_D2-typ_SF"/>
</dbReference>
<dbReference type="InterPro" id="IPR000851">
    <property type="entry name" value="Ribosomal_uS5"/>
</dbReference>
<dbReference type="InterPro" id="IPR005712">
    <property type="entry name" value="Ribosomal_uS5_bac-type"/>
</dbReference>
<dbReference type="InterPro" id="IPR005324">
    <property type="entry name" value="Ribosomal_uS5_C"/>
</dbReference>
<dbReference type="InterPro" id="IPR013810">
    <property type="entry name" value="Ribosomal_uS5_N"/>
</dbReference>
<dbReference type="InterPro" id="IPR018192">
    <property type="entry name" value="Ribosomal_uS5_N_CS"/>
</dbReference>
<dbReference type="InterPro" id="IPR014721">
    <property type="entry name" value="Ribsml_uS5_D2-typ_fold_subgr"/>
</dbReference>
<dbReference type="NCBIfam" id="TIGR01021">
    <property type="entry name" value="rpsE_bact"/>
    <property type="match status" value="1"/>
</dbReference>
<dbReference type="PANTHER" id="PTHR48277">
    <property type="entry name" value="MITOCHONDRIAL RIBOSOMAL PROTEIN S5"/>
    <property type="match status" value="1"/>
</dbReference>
<dbReference type="PANTHER" id="PTHR48277:SF1">
    <property type="entry name" value="MITOCHONDRIAL RIBOSOMAL PROTEIN S5"/>
    <property type="match status" value="1"/>
</dbReference>
<dbReference type="Pfam" id="PF00333">
    <property type="entry name" value="Ribosomal_S5"/>
    <property type="match status" value="1"/>
</dbReference>
<dbReference type="Pfam" id="PF03719">
    <property type="entry name" value="Ribosomal_S5_C"/>
    <property type="match status" value="1"/>
</dbReference>
<dbReference type="SUPFAM" id="SSF54768">
    <property type="entry name" value="dsRNA-binding domain-like"/>
    <property type="match status" value="1"/>
</dbReference>
<dbReference type="SUPFAM" id="SSF54211">
    <property type="entry name" value="Ribosomal protein S5 domain 2-like"/>
    <property type="match status" value="1"/>
</dbReference>
<dbReference type="PROSITE" id="PS00585">
    <property type="entry name" value="RIBOSOMAL_S5"/>
    <property type="match status" value="1"/>
</dbReference>
<dbReference type="PROSITE" id="PS50881">
    <property type="entry name" value="S5_DSRBD"/>
    <property type="match status" value="1"/>
</dbReference>
<gene>
    <name evidence="1" type="primary">rpsE</name>
    <name type="ordered locus">CGSHiEE_08090</name>
</gene>